<name>CALM1_ORYSJ</name>
<evidence type="ECO:0000250" key="1"/>
<evidence type="ECO:0000250" key="2">
    <source>
        <dbReference type="UniProtKB" id="P59220"/>
    </source>
</evidence>
<evidence type="ECO:0000255" key="3">
    <source>
        <dbReference type="PROSITE-ProRule" id="PRU00448"/>
    </source>
</evidence>
<evidence type="ECO:0000269" key="4">
    <source>
    </source>
</evidence>
<evidence type="ECO:0000269" key="5">
    <source>
    </source>
</evidence>
<evidence type="ECO:0000303" key="6">
    <source>
    </source>
</evidence>
<evidence type="ECO:0000305" key="7"/>
<evidence type="ECO:0000312" key="8">
    <source>
        <dbReference type="EMBL" id="BAA88540.1"/>
    </source>
</evidence>
<evidence type="ECO:0000312" key="9">
    <source>
        <dbReference type="EMBL" id="BAC10352.1"/>
    </source>
</evidence>
<evidence type="ECO:0000312" key="10">
    <source>
        <dbReference type="EMBL" id="BAD30293.1"/>
    </source>
</evidence>
<evidence type="ECO:0000312" key="11">
    <source>
        <dbReference type="EMBL" id="BAH01268.1"/>
    </source>
</evidence>
<evidence type="ECO:0000312" key="12">
    <source>
        <dbReference type="EMBL" id="BAS71478.1"/>
    </source>
</evidence>
<evidence type="ECO:0000312" key="13">
    <source>
        <dbReference type="EMBL" id="BAS83924.1"/>
    </source>
</evidence>
<evidence type="ECO:0000312" key="14">
    <source>
        <dbReference type="EMBL" id="BAT03301.1"/>
    </source>
</evidence>
<evidence type="ECO:0000312" key="15">
    <source>
        <dbReference type="EMBL" id="EAZ26731.1"/>
    </source>
</evidence>
<evidence type="ECO:0000312" key="16">
    <source>
        <dbReference type="EMBL" id="EEE67848.1"/>
    </source>
</evidence>
<accession>Q0JNS6</accession>
<accession>A2ZRL4</accession>
<accession>A3BNK8</accession>
<accession>B7EHB8</accession>
<accession>O49184</accession>
<accession>P29612</accession>
<accession>Q10M88</accession>
<accession>Q7F8I8</accession>
<feature type="initiator methionine" description="Removed" evidence="1">
    <location>
        <position position="1"/>
    </location>
</feature>
<feature type="chain" id="PRO_0000198298" description="Calmodulin-1">
    <location>
        <begin position="2"/>
        <end position="149"/>
    </location>
</feature>
<feature type="domain" description="EF-hand 1" evidence="3">
    <location>
        <begin position="8"/>
        <end position="43"/>
    </location>
</feature>
<feature type="domain" description="EF-hand 2" evidence="3">
    <location>
        <begin position="44"/>
        <end position="79"/>
    </location>
</feature>
<feature type="domain" description="EF-hand 3" evidence="3">
    <location>
        <begin position="81"/>
        <end position="116"/>
    </location>
</feature>
<feature type="domain" description="EF-hand 4" evidence="3">
    <location>
        <begin position="117"/>
        <end position="149"/>
    </location>
</feature>
<feature type="binding site" evidence="3">
    <location>
        <position position="21"/>
    </location>
    <ligand>
        <name>Ca(2+)</name>
        <dbReference type="ChEBI" id="CHEBI:29108"/>
        <label>1</label>
    </ligand>
</feature>
<feature type="binding site" evidence="3">
    <location>
        <position position="23"/>
    </location>
    <ligand>
        <name>Ca(2+)</name>
        <dbReference type="ChEBI" id="CHEBI:29108"/>
        <label>1</label>
    </ligand>
</feature>
<feature type="binding site" evidence="3">
    <location>
        <position position="25"/>
    </location>
    <ligand>
        <name>Ca(2+)</name>
        <dbReference type="ChEBI" id="CHEBI:29108"/>
        <label>1</label>
    </ligand>
</feature>
<feature type="binding site" evidence="3">
    <location>
        <position position="27"/>
    </location>
    <ligand>
        <name>Ca(2+)</name>
        <dbReference type="ChEBI" id="CHEBI:29108"/>
        <label>1</label>
    </ligand>
</feature>
<feature type="binding site" evidence="3">
    <location>
        <position position="32"/>
    </location>
    <ligand>
        <name>Ca(2+)</name>
        <dbReference type="ChEBI" id="CHEBI:29108"/>
        <label>1</label>
    </ligand>
</feature>
<feature type="binding site" evidence="3">
    <location>
        <position position="57"/>
    </location>
    <ligand>
        <name>Ca(2+)</name>
        <dbReference type="ChEBI" id="CHEBI:29108"/>
        <label>2</label>
    </ligand>
</feature>
<feature type="binding site" evidence="3">
    <location>
        <position position="59"/>
    </location>
    <ligand>
        <name>Ca(2+)</name>
        <dbReference type="ChEBI" id="CHEBI:29108"/>
        <label>2</label>
    </ligand>
</feature>
<feature type="binding site" evidence="3">
    <location>
        <position position="61"/>
    </location>
    <ligand>
        <name>Ca(2+)</name>
        <dbReference type="ChEBI" id="CHEBI:29108"/>
        <label>2</label>
    </ligand>
</feature>
<feature type="binding site" evidence="3">
    <location>
        <position position="63"/>
    </location>
    <ligand>
        <name>Ca(2+)</name>
        <dbReference type="ChEBI" id="CHEBI:29108"/>
        <label>2</label>
    </ligand>
</feature>
<feature type="binding site" evidence="3">
    <location>
        <position position="68"/>
    </location>
    <ligand>
        <name>Ca(2+)</name>
        <dbReference type="ChEBI" id="CHEBI:29108"/>
        <label>2</label>
    </ligand>
</feature>
<feature type="binding site" evidence="3">
    <location>
        <position position="94"/>
    </location>
    <ligand>
        <name>Ca(2+)</name>
        <dbReference type="ChEBI" id="CHEBI:29108"/>
        <label>3</label>
    </ligand>
</feature>
<feature type="binding site" evidence="3">
    <location>
        <position position="96"/>
    </location>
    <ligand>
        <name>Ca(2+)</name>
        <dbReference type="ChEBI" id="CHEBI:29108"/>
        <label>3</label>
    </ligand>
</feature>
<feature type="binding site" evidence="3">
    <location>
        <position position="98"/>
    </location>
    <ligand>
        <name>Ca(2+)</name>
        <dbReference type="ChEBI" id="CHEBI:29108"/>
        <label>3</label>
    </ligand>
</feature>
<feature type="binding site" evidence="3">
    <location>
        <position position="105"/>
    </location>
    <ligand>
        <name>Ca(2+)</name>
        <dbReference type="ChEBI" id="CHEBI:29108"/>
        <label>3</label>
    </ligand>
</feature>
<feature type="binding site" evidence="3">
    <location>
        <position position="130"/>
    </location>
    <ligand>
        <name>Ca(2+)</name>
        <dbReference type="ChEBI" id="CHEBI:29108"/>
        <label>4</label>
    </ligand>
</feature>
<feature type="binding site" evidence="3">
    <location>
        <position position="132"/>
    </location>
    <ligand>
        <name>Ca(2+)</name>
        <dbReference type="ChEBI" id="CHEBI:29108"/>
        <label>4</label>
    </ligand>
</feature>
<feature type="binding site" evidence="3">
    <location>
        <position position="134"/>
    </location>
    <ligand>
        <name>Ca(2+)</name>
        <dbReference type="ChEBI" id="CHEBI:29108"/>
        <label>4</label>
    </ligand>
</feature>
<feature type="binding site" evidence="3">
    <location>
        <position position="136"/>
    </location>
    <ligand>
        <name>Ca(2+)</name>
        <dbReference type="ChEBI" id="CHEBI:29108"/>
        <label>4</label>
    </ligand>
</feature>
<feature type="binding site" evidence="3">
    <location>
        <position position="141"/>
    </location>
    <ligand>
        <name>Ca(2+)</name>
        <dbReference type="ChEBI" id="CHEBI:29108"/>
        <label>4</label>
    </ligand>
</feature>
<feature type="modified residue" description="N-acetylalanine" evidence="1">
    <location>
        <position position="2"/>
    </location>
</feature>
<feature type="modified residue" description="N6,N6,N6-trimethyllysine" evidence="1">
    <location>
        <position position="116"/>
    </location>
</feature>
<feature type="mutagenesis site" description="Triggers activation of CAMK1; when associated with G-123 and S-127." evidence="4">
    <original>T</original>
    <variation>A</variation>
    <location>
        <position position="111"/>
    </location>
</feature>
<feature type="mutagenesis site" description="Triggers activation of CAMK1; when associated with A-111 and S-127." evidence="4">
    <original>D</original>
    <variation>G</variation>
    <location>
        <position position="123"/>
    </location>
</feature>
<feature type="mutagenesis site" description="Triggers activation of CAMK1; when associated with A-111 and G-123." evidence="4">
    <original>R</original>
    <variation>S</variation>
    <location>
        <position position="127"/>
    </location>
</feature>
<dbReference type="EMBL" id="AF042840">
    <property type="protein sequence ID" value="AAC36059.1"/>
    <property type="molecule type" value="mRNA"/>
</dbReference>
<dbReference type="EMBL" id="AF441191">
    <property type="protein sequence ID" value="AAL35329.1"/>
    <property type="molecule type" value="mRNA"/>
</dbReference>
<dbReference type="EMBL" id="AP000969">
    <property type="protein sequence ID" value="BAA88540.1"/>
    <property type="molecule type" value="Genomic_DNA"/>
</dbReference>
<dbReference type="EMBL" id="AP003813">
    <property type="protein sequence ID" value="BAD30293.1"/>
    <property type="molecule type" value="Genomic_DNA"/>
</dbReference>
<dbReference type="EMBL" id="AP003818">
    <property type="protein sequence ID" value="BAC10352.1"/>
    <property type="molecule type" value="Genomic_DNA"/>
</dbReference>
<dbReference type="EMBL" id="DP000009">
    <property type="protein sequence ID" value="ABF95646.1"/>
    <property type="molecule type" value="Genomic_DNA"/>
</dbReference>
<dbReference type="EMBL" id="AP008207">
    <property type="protein sequence ID" value="BAF04602.2"/>
    <property type="molecule type" value="Genomic_DNA"/>
</dbReference>
<dbReference type="EMBL" id="AP008209">
    <property type="protein sequence ID" value="BAF11862.1"/>
    <property type="molecule type" value="Genomic_DNA"/>
</dbReference>
<dbReference type="EMBL" id="AP008213">
    <property type="protein sequence ID" value="BAF22605.1"/>
    <property type="molecule type" value="Genomic_DNA"/>
</dbReference>
<dbReference type="EMBL" id="AP014957">
    <property type="protein sequence ID" value="BAS71478.1"/>
    <property type="molecule type" value="Genomic_DNA"/>
</dbReference>
<dbReference type="EMBL" id="AP014959">
    <property type="protein sequence ID" value="BAS83924.1"/>
    <property type="molecule type" value="Genomic_DNA"/>
</dbReference>
<dbReference type="EMBL" id="AP014963">
    <property type="protein sequence ID" value="BAT03301.1"/>
    <property type="molecule type" value="Genomic_DNA"/>
</dbReference>
<dbReference type="EMBL" id="CM000138">
    <property type="status" value="NOT_ANNOTATED_CDS"/>
    <property type="molecule type" value="Genomic_DNA"/>
</dbReference>
<dbReference type="EMBL" id="CM000140">
    <property type="protein sequence ID" value="EAZ26731.1"/>
    <property type="molecule type" value="Genomic_DNA"/>
</dbReference>
<dbReference type="EMBL" id="CM000144">
    <property type="protein sequence ID" value="EEE67848.1"/>
    <property type="molecule type" value="Genomic_DNA"/>
</dbReference>
<dbReference type="EMBL" id="AK070090">
    <property type="protein sequence ID" value="BAG91765.1"/>
    <property type="molecule type" value="mRNA"/>
</dbReference>
<dbReference type="EMBL" id="AK071852">
    <property type="protein sequence ID" value="BAG92729.1"/>
    <property type="molecule type" value="mRNA"/>
</dbReference>
<dbReference type="EMBL" id="AK242346">
    <property type="protein sequence ID" value="BAH01268.1"/>
    <property type="molecule type" value="mRNA"/>
</dbReference>
<dbReference type="RefSeq" id="XP_015622341.1">
    <property type="nucleotide sequence ID" value="XM_015766855.1"/>
</dbReference>
<dbReference type="SMR" id="Q0JNS6"/>
<dbReference type="ELM" id="Q0JNS6"/>
<dbReference type="FunCoup" id="Q0JNS6">
    <property type="interactions" value="2973"/>
</dbReference>
<dbReference type="STRING" id="39947.Q0JNS6"/>
<dbReference type="PaxDb" id="39947-Q0JNS6"/>
<dbReference type="EnsemblPlants" id="Os01t0267900-01">
    <property type="protein sequence ID" value="Os01t0267900-01"/>
    <property type="gene ID" value="Os01g0267900"/>
</dbReference>
<dbReference type="EnsemblPlants" id="Os03t0319300-01">
    <property type="protein sequence ID" value="Os03t0319300-01"/>
    <property type="gene ID" value="Os03g0319300"/>
</dbReference>
<dbReference type="EnsemblPlants" id="Os07t0687200-02">
    <property type="protein sequence ID" value="Os07t0687200-02"/>
    <property type="gene ID" value="Os07g0687200"/>
</dbReference>
<dbReference type="Gramene" id="Os01t0267900-01">
    <property type="protein sequence ID" value="Os01t0267900-01"/>
    <property type="gene ID" value="Os01g0267900"/>
</dbReference>
<dbReference type="Gramene" id="Os03t0319300-01">
    <property type="protein sequence ID" value="Os03t0319300-01"/>
    <property type="gene ID" value="Os03g0319300"/>
</dbReference>
<dbReference type="Gramene" id="Os07t0687200-02">
    <property type="protein sequence ID" value="Os07t0687200-02"/>
    <property type="gene ID" value="Os07g0687200"/>
</dbReference>
<dbReference type="KEGG" id="dosa:Os01g0267900"/>
<dbReference type="KEGG" id="dosa:Os03g0319300"/>
<dbReference type="KEGG" id="dosa:Os07g0687200"/>
<dbReference type="KEGG" id="osa:4332664"/>
<dbReference type="eggNOG" id="KOG0027">
    <property type="taxonomic scope" value="Eukaryota"/>
</dbReference>
<dbReference type="HOGENOM" id="CLU_061288_2_0_1"/>
<dbReference type="InParanoid" id="Q0JNS6"/>
<dbReference type="OMA" id="ARKMKEC"/>
<dbReference type="OrthoDB" id="727752at2759"/>
<dbReference type="Proteomes" id="UP000000763">
    <property type="component" value="Chromosome 1"/>
</dbReference>
<dbReference type="Proteomes" id="UP000000763">
    <property type="component" value="Chromosome 3"/>
</dbReference>
<dbReference type="Proteomes" id="UP000000763">
    <property type="component" value="Chromosome 7"/>
</dbReference>
<dbReference type="Proteomes" id="UP000007752">
    <property type="component" value="Chromosome 1"/>
</dbReference>
<dbReference type="Proteomes" id="UP000007752">
    <property type="component" value="Chromosome 3"/>
</dbReference>
<dbReference type="Proteomes" id="UP000007752">
    <property type="component" value="Chromosome 7"/>
</dbReference>
<dbReference type="Proteomes" id="UP000059680">
    <property type="component" value="Chromosome 1"/>
</dbReference>
<dbReference type="Proteomes" id="UP000059680">
    <property type="component" value="Chromosome 3"/>
</dbReference>
<dbReference type="Proteomes" id="UP000059680">
    <property type="component" value="Chromosome 7"/>
</dbReference>
<dbReference type="ExpressionAtlas" id="Q0JNS6">
    <property type="expression patterns" value="baseline and differential"/>
</dbReference>
<dbReference type="GO" id="GO:0005737">
    <property type="term" value="C:cytoplasm"/>
    <property type="evidence" value="ECO:0000318"/>
    <property type="project" value="GO_Central"/>
</dbReference>
<dbReference type="GO" id="GO:0005509">
    <property type="term" value="F:calcium ion binding"/>
    <property type="evidence" value="ECO:0000318"/>
    <property type="project" value="GO_Central"/>
</dbReference>
<dbReference type="GO" id="GO:0030234">
    <property type="term" value="F:enzyme regulator activity"/>
    <property type="evidence" value="ECO:0000318"/>
    <property type="project" value="GO_Central"/>
</dbReference>
<dbReference type="CDD" id="cd00051">
    <property type="entry name" value="EFh"/>
    <property type="match status" value="2"/>
</dbReference>
<dbReference type="FunFam" id="1.10.238.10:FF:000034">
    <property type="entry name" value="Calmodulin"/>
    <property type="match status" value="1"/>
</dbReference>
<dbReference type="FunFam" id="1.10.238.10:FF:000042">
    <property type="entry name" value="Calmodulin"/>
    <property type="match status" value="1"/>
</dbReference>
<dbReference type="Gene3D" id="1.10.238.10">
    <property type="entry name" value="EF-hand"/>
    <property type="match status" value="3"/>
</dbReference>
<dbReference type="InterPro" id="IPR050230">
    <property type="entry name" value="CALM/Myosin/TropC-like"/>
</dbReference>
<dbReference type="InterPro" id="IPR011992">
    <property type="entry name" value="EF-hand-dom_pair"/>
</dbReference>
<dbReference type="InterPro" id="IPR018247">
    <property type="entry name" value="EF_Hand_1_Ca_BS"/>
</dbReference>
<dbReference type="InterPro" id="IPR002048">
    <property type="entry name" value="EF_hand_dom"/>
</dbReference>
<dbReference type="PANTHER" id="PTHR23048:SF53">
    <property type="entry name" value="CALMODULIN"/>
    <property type="match status" value="1"/>
</dbReference>
<dbReference type="PANTHER" id="PTHR23048">
    <property type="entry name" value="MYOSIN LIGHT CHAIN 1, 3"/>
    <property type="match status" value="1"/>
</dbReference>
<dbReference type="Pfam" id="PF13499">
    <property type="entry name" value="EF-hand_7"/>
    <property type="match status" value="2"/>
</dbReference>
<dbReference type="SMART" id="SM00054">
    <property type="entry name" value="EFh"/>
    <property type="match status" value="4"/>
</dbReference>
<dbReference type="SUPFAM" id="SSF47473">
    <property type="entry name" value="EF-hand"/>
    <property type="match status" value="1"/>
</dbReference>
<dbReference type="PROSITE" id="PS00018">
    <property type="entry name" value="EF_HAND_1"/>
    <property type="match status" value="4"/>
</dbReference>
<dbReference type="PROSITE" id="PS50222">
    <property type="entry name" value="EF_HAND_2"/>
    <property type="match status" value="4"/>
</dbReference>
<keyword id="KW-0007">Acetylation</keyword>
<keyword id="KW-0106">Calcium</keyword>
<keyword id="KW-0479">Metal-binding</keyword>
<keyword id="KW-0488">Methylation</keyword>
<keyword id="KW-1185">Reference proteome</keyword>
<keyword id="KW-0677">Repeat</keyword>
<sequence>MADQLTDDQIAEFKEAFSLFDKDGDGCITTKELGTVMRSLGQNPTEAELQDMINEVDADGNGTIDFPEFLNLMARKMKDTDSEEELKEAFRVFDKDQNGFISAAELRHVMTNLGEKLTDEEVDEMIREADVDGDGQINYEEFVKVMMAK</sequence>
<gene>
    <name evidence="6" type="primary">CAM1-1</name>
    <name evidence="6" type="synonym">CAM1</name>
    <name evidence="13" type="ordered locus">Os03g0319300</name>
    <name evidence="7" type="ordered locus">LOC_Os03g20370</name>
    <name evidence="15" type="ORF">OsJ_010214</name>
</gene>
<gene>
    <name evidence="6" type="primary">CAM1-2</name>
    <name evidence="6" type="synonym">CAM</name>
    <name evidence="14" type="ordered locus">Os07g0687200</name>
    <name evidence="7" type="ordered locus">LOC_Os07g48780</name>
    <name evidence="10" type="ORF">OJ1150_E04.120-1</name>
    <name evidence="9" type="ORF">OJ1200_C08.124-1</name>
    <name evidence="16" type="ORF">OsJ_024630</name>
    <name evidence="16" type="ORF">OsJ_25643</name>
</gene>
<gene>
    <name evidence="6" type="primary">CAM1-3</name>
    <name evidence="12" type="ordered locus">Os01g0267900</name>
    <name evidence="7" type="ordered locus">LOC_Os01g16240</name>
    <name type="ORF">OsJ_001186</name>
    <name evidence="8" type="ORF">P0011D01.22</name>
</gene>
<proteinExistence type="evidence at protein level"/>
<reference key="1">
    <citation type="submission" date="1998-01" db="EMBL/GenBank/DDBJ databases">
        <authorList>
            <person name="Choi Y.J."/>
            <person name="Kim C.Y."/>
            <person name="Cheon S.Y."/>
            <person name="Cho M.J."/>
        </authorList>
    </citation>
    <scope>NUCLEOTIDE SEQUENCE [MRNA] (CAM1-1)</scope>
</reference>
<reference key="2">
    <citation type="submission" date="2001-10" db="EMBL/GenBank/DDBJ databases">
        <title>The characterization of a rice CaM-binding protein kinase.</title>
        <authorList>
            <person name="Zhang L."/>
            <person name="Lu Y.T."/>
        </authorList>
    </citation>
    <scope>NUCLEOTIDE SEQUENCE [MRNA] (CAM1-2)</scope>
</reference>
<reference key="3">
    <citation type="journal article" date="2002" name="Nature">
        <title>The genome sequence and structure of rice chromosome 1.</title>
        <authorList>
            <person name="Sasaki T."/>
            <person name="Matsumoto T."/>
            <person name="Yamamoto K."/>
            <person name="Sakata K."/>
            <person name="Baba T."/>
            <person name="Katayose Y."/>
            <person name="Wu J."/>
            <person name="Niimura Y."/>
            <person name="Cheng Z."/>
            <person name="Nagamura Y."/>
            <person name="Antonio B.A."/>
            <person name="Kanamori H."/>
            <person name="Hosokawa S."/>
            <person name="Masukawa M."/>
            <person name="Arikawa K."/>
            <person name="Chiden Y."/>
            <person name="Hayashi M."/>
            <person name="Okamoto M."/>
            <person name="Ando T."/>
            <person name="Aoki H."/>
            <person name="Arita K."/>
            <person name="Hamada M."/>
            <person name="Harada C."/>
            <person name="Hijishita S."/>
            <person name="Honda M."/>
            <person name="Ichikawa Y."/>
            <person name="Idonuma A."/>
            <person name="Iijima M."/>
            <person name="Ikeda M."/>
            <person name="Ikeno M."/>
            <person name="Ito S."/>
            <person name="Ito T."/>
            <person name="Ito Y."/>
            <person name="Ito Y."/>
            <person name="Iwabuchi A."/>
            <person name="Kamiya K."/>
            <person name="Karasawa W."/>
            <person name="Katagiri S."/>
            <person name="Kikuta A."/>
            <person name="Kobayashi N."/>
            <person name="Kono I."/>
            <person name="Machita K."/>
            <person name="Maehara T."/>
            <person name="Mizuno H."/>
            <person name="Mizubayashi T."/>
            <person name="Mukai Y."/>
            <person name="Nagasaki H."/>
            <person name="Nakashima M."/>
            <person name="Nakama Y."/>
            <person name="Nakamichi Y."/>
            <person name="Nakamura M."/>
            <person name="Namiki N."/>
            <person name="Negishi M."/>
            <person name="Ohta I."/>
            <person name="Ono N."/>
            <person name="Saji S."/>
            <person name="Sakai K."/>
            <person name="Shibata M."/>
            <person name="Shimokawa T."/>
            <person name="Shomura A."/>
            <person name="Song J."/>
            <person name="Takazaki Y."/>
            <person name="Terasawa K."/>
            <person name="Tsuji K."/>
            <person name="Waki K."/>
            <person name="Yamagata H."/>
            <person name="Yamane H."/>
            <person name="Yoshiki S."/>
            <person name="Yoshihara R."/>
            <person name="Yukawa K."/>
            <person name="Zhong H."/>
            <person name="Iwama H."/>
            <person name="Endo T."/>
            <person name="Ito H."/>
            <person name="Hahn J.H."/>
            <person name="Kim H.-I."/>
            <person name="Eun M.-Y."/>
            <person name="Yano M."/>
            <person name="Jiang J."/>
            <person name="Gojobori T."/>
        </authorList>
    </citation>
    <scope>NUCLEOTIDE SEQUENCE [LARGE SCALE GENOMIC DNA] (CAM1-3)</scope>
    <source>
        <strain>cv. Nipponbare</strain>
    </source>
</reference>
<reference key="4">
    <citation type="journal article" date="2005" name="Genome Res.">
        <title>Sequence, annotation, and analysis of synteny between rice chromosome 3 and diverged grass species.</title>
        <authorList>
            <consortium name="The rice chromosome 3 sequencing consortium"/>
            <person name="Buell C.R."/>
            <person name="Yuan Q."/>
            <person name="Ouyang S."/>
            <person name="Liu J."/>
            <person name="Zhu W."/>
            <person name="Wang A."/>
            <person name="Maiti R."/>
            <person name="Haas B."/>
            <person name="Wortman J."/>
            <person name="Pertea M."/>
            <person name="Jones K.M."/>
            <person name="Kim M."/>
            <person name="Overton L."/>
            <person name="Tsitrin T."/>
            <person name="Fadrosh D."/>
            <person name="Bera J."/>
            <person name="Weaver B."/>
            <person name="Jin S."/>
            <person name="Johri S."/>
            <person name="Reardon M."/>
            <person name="Webb K."/>
            <person name="Hill J."/>
            <person name="Moffat K."/>
            <person name="Tallon L."/>
            <person name="Van Aken S."/>
            <person name="Lewis M."/>
            <person name="Utterback T."/>
            <person name="Feldblyum T."/>
            <person name="Zismann V."/>
            <person name="Iobst S."/>
            <person name="Hsiao J."/>
            <person name="de Vazeille A.R."/>
            <person name="Salzberg S.L."/>
            <person name="White O."/>
            <person name="Fraser C.M."/>
            <person name="Yu Y."/>
            <person name="Kim H."/>
            <person name="Rambo T."/>
            <person name="Currie J."/>
            <person name="Collura K."/>
            <person name="Kernodle-Thompson S."/>
            <person name="Wei F."/>
            <person name="Kudrna K."/>
            <person name="Ammiraju J.S.S."/>
            <person name="Luo M."/>
            <person name="Goicoechea J.L."/>
            <person name="Wing R.A."/>
            <person name="Henry D."/>
            <person name="Oates R."/>
            <person name="Palmer M."/>
            <person name="Pries G."/>
            <person name="Saski C."/>
            <person name="Simmons J."/>
            <person name="Soderlund C."/>
            <person name="Nelson W."/>
            <person name="de la Bastide M."/>
            <person name="Spiegel L."/>
            <person name="Nascimento L."/>
            <person name="Huang E."/>
            <person name="Preston R."/>
            <person name="Zutavern T."/>
            <person name="Palmer L."/>
            <person name="O'Shaughnessy A."/>
            <person name="Dike S."/>
            <person name="McCombie W.R."/>
            <person name="Minx P."/>
            <person name="Cordum H."/>
            <person name="Wilson R."/>
            <person name="Jin W."/>
            <person name="Lee H.R."/>
            <person name="Jiang J."/>
            <person name="Jackson S."/>
        </authorList>
    </citation>
    <scope>NUCLEOTIDE SEQUENCE [LARGE SCALE GENOMIC DNA] (CAM1-1)</scope>
    <source>
        <strain>cv. Nipponbare</strain>
    </source>
</reference>
<reference key="5">
    <citation type="journal article" date="2005" name="Nature">
        <title>The map-based sequence of the rice genome.</title>
        <authorList>
            <consortium name="International rice genome sequencing project (IRGSP)"/>
        </authorList>
    </citation>
    <scope>NUCLEOTIDE SEQUENCE [LARGE SCALE GENOMIC DNA] (CAM1-1; CAM1-2 AND CAM1-3)</scope>
    <source>
        <strain>cv. Nipponbare</strain>
    </source>
</reference>
<reference key="6">
    <citation type="journal article" date="2008" name="Nucleic Acids Res.">
        <title>The rice annotation project database (RAP-DB): 2008 update.</title>
        <authorList>
            <consortium name="The rice annotation project (RAP)"/>
        </authorList>
    </citation>
    <scope>GENOME REANNOTATION</scope>
    <source>
        <strain>cv. Nipponbare</strain>
    </source>
</reference>
<reference key="7">
    <citation type="journal article" date="2013" name="Rice">
        <title>Improvement of the Oryza sativa Nipponbare reference genome using next generation sequence and optical map data.</title>
        <authorList>
            <person name="Kawahara Y."/>
            <person name="de la Bastide M."/>
            <person name="Hamilton J.P."/>
            <person name="Kanamori H."/>
            <person name="McCombie W.R."/>
            <person name="Ouyang S."/>
            <person name="Schwartz D.C."/>
            <person name="Tanaka T."/>
            <person name="Wu J."/>
            <person name="Zhou S."/>
            <person name="Childs K.L."/>
            <person name="Davidson R.M."/>
            <person name="Lin H."/>
            <person name="Quesada-Ocampo L."/>
            <person name="Vaillancourt B."/>
            <person name="Sakai H."/>
            <person name="Lee S.S."/>
            <person name="Kim J."/>
            <person name="Numa H."/>
            <person name="Itoh T."/>
            <person name="Buell C.R."/>
            <person name="Matsumoto T."/>
        </authorList>
    </citation>
    <scope>GENOME REANNOTATION</scope>
    <source>
        <strain>cv. Nipponbare</strain>
    </source>
</reference>
<reference key="8">
    <citation type="journal article" date="2005" name="PLoS Biol.">
        <title>The genomes of Oryza sativa: a history of duplications.</title>
        <authorList>
            <person name="Yu J."/>
            <person name="Wang J."/>
            <person name="Lin W."/>
            <person name="Li S."/>
            <person name="Li H."/>
            <person name="Zhou J."/>
            <person name="Ni P."/>
            <person name="Dong W."/>
            <person name="Hu S."/>
            <person name="Zeng C."/>
            <person name="Zhang J."/>
            <person name="Zhang Y."/>
            <person name="Li R."/>
            <person name="Xu Z."/>
            <person name="Li S."/>
            <person name="Li X."/>
            <person name="Zheng H."/>
            <person name="Cong L."/>
            <person name="Lin L."/>
            <person name="Yin J."/>
            <person name="Geng J."/>
            <person name="Li G."/>
            <person name="Shi J."/>
            <person name="Liu J."/>
            <person name="Lv H."/>
            <person name="Li J."/>
            <person name="Wang J."/>
            <person name="Deng Y."/>
            <person name="Ran L."/>
            <person name="Shi X."/>
            <person name="Wang X."/>
            <person name="Wu Q."/>
            <person name="Li C."/>
            <person name="Ren X."/>
            <person name="Wang J."/>
            <person name="Wang X."/>
            <person name="Li D."/>
            <person name="Liu D."/>
            <person name="Zhang X."/>
            <person name="Ji Z."/>
            <person name="Zhao W."/>
            <person name="Sun Y."/>
            <person name="Zhang Z."/>
            <person name="Bao J."/>
            <person name="Han Y."/>
            <person name="Dong L."/>
            <person name="Ji J."/>
            <person name="Chen P."/>
            <person name="Wu S."/>
            <person name="Liu J."/>
            <person name="Xiao Y."/>
            <person name="Bu D."/>
            <person name="Tan J."/>
            <person name="Yang L."/>
            <person name="Ye C."/>
            <person name="Zhang J."/>
            <person name="Xu J."/>
            <person name="Zhou Y."/>
            <person name="Yu Y."/>
            <person name="Zhang B."/>
            <person name="Zhuang S."/>
            <person name="Wei H."/>
            <person name="Liu B."/>
            <person name="Lei M."/>
            <person name="Yu H."/>
            <person name="Li Y."/>
            <person name="Xu H."/>
            <person name="Wei S."/>
            <person name="He X."/>
            <person name="Fang L."/>
            <person name="Zhang Z."/>
            <person name="Zhang Y."/>
            <person name="Huang X."/>
            <person name="Su Z."/>
            <person name="Tong W."/>
            <person name="Li J."/>
            <person name="Tong Z."/>
            <person name="Li S."/>
            <person name="Ye J."/>
            <person name="Wang L."/>
            <person name="Fang L."/>
            <person name="Lei T."/>
            <person name="Chen C.-S."/>
            <person name="Chen H.-C."/>
            <person name="Xu Z."/>
            <person name="Li H."/>
            <person name="Huang H."/>
            <person name="Zhang F."/>
            <person name="Xu H."/>
            <person name="Li N."/>
            <person name="Zhao C."/>
            <person name="Li S."/>
            <person name="Dong L."/>
            <person name="Huang Y."/>
            <person name="Li L."/>
            <person name="Xi Y."/>
            <person name="Qi Q."/>
            <person name="Li W."/>
            <person name="Zhang B."/>
            <person name="Hu W."/>
            <person name="Zhang Y."/>
            <person name="Tian X."/>
            <person name="Jiao Y."/>
            <person name="Liang X."/>
            <person name="Jin J."/>
            <person name="Gao L."/>
            <person name="Zheng W."/>
            <person name="Hao B."/>
            <person name="Liu S.-M."/>
            <person name="Wang W."/>
            <person name="Yuan L."/>
            <person name="Cao M."/>
            <person name="McDermott J."/>
            <person name="Samudrala R."/>
            <person name="Wang J."/>
            <person name="Wong G.K.-S."/>
            <person name="Yang H."/>
        </authorList>
    </citation>
    <scope>NUCLEOTIDE SEQUENCE [LARGE SCALE GENOMIC DNA] (CAM1-1; CAM1-2 AND CAM1-3)</scope>
    <source>
        <strain>cv. Nipponbare</strain>
    </source>
</reference>
<reference key="9">
    <citation type="journal article" date="2003" name="Science">
        <title>Collection, mapping, and annotation of over 28,000 cDNA clones from japonica rice.</title>
        <authorList>
            <consortium name="The rice full-length cDNA consortium"/>
        </authorList>
    </citation>
    <scope>NUCLEOTIDE SEQUENCE [LARGE SCALE MRNA]</scope>
    <source>
        <strain>cv. Nipponbare</strain>
        <tissue evidence="11">Pistil</tissue>
    </source>
</reference>
<reference key="10">
    <citation type="journal article" date="2006" name="FEBS Lett.">
        <title>Calmodulin isoform-specific activation of a rice calmodulin-binding kinase conferred by only three amino-acids of OsCaM61.</title>
        <authorList>
            <person name="Li D.-F."/>
            <person name="Li J."/>
            <person name="Ma L."/>
            <person name="Zhang L."/>
            <person name="Lu Y.-T."/>
        </authorList>
    </citation>
    <scope>MUTAGENESIS OF THR-111; ASP-123 AND ARG-127</scope>
</reference>
<reference key="11">
    <citation type="journal article" date="2007" name="BMC Plant Biol.">
        <title>Genome-wide identification and analyses of the rice calmodulin and related potential calcium sensor proteins.</title>
        <authorList>
            <person name="Boonburapong B."/>
            <person name="Buaboocha T."/>
        </authorList>
    </citation>
    <scope>GENE FAMILY</scope>
    <scope>NOMENCLATURE</scope>
</reference>
<reference key="12">
    <citation type="journal article" date="2024" name="Rice">
        <title>A mitochondrial localized chaperone regulator OsBAG6 functions in saline-alkaline stress tolerance in rice.</title>
        <authorList>
            <person name="Wang J."/>
            <person name="Ao M."/>
            <person name="Ma A."/>
            <person name="Yu J."/>
            <person name="Guo P."/>
            <person name="Huang S."/>
            <person name="Peng X."/>
            <person name="Yun D.J."/>
            <person name="Xu Z.Y."/>
        </authorList>
    </citation>
    <scope>FUNCTION</scope>
    <scope>INTERACTION WITH BAG6</scope>
</reference>
<protein>
    <recommendedName>
        <fullName evidence="6">Calmodulin-1</fullName>
        <shortName evidence="6">CaM-1</shortName>
    </recommendedName>
</protein>
<organism>
    <name type="scientific">Oryza sativa subsp. japonica</name>
    <name type="common">Rice</name>
    <dbReference type="NCBI Taxonomy" id="39947"/>
    <lineage>
        <taxon>Eukaryota</taxon>
        <taxon>Viridiplantae</taxon>
        <taxon>Streptophyta</taxon>
        <taxon>Embryophyta</taxon>
        <taxon>Tracheophyta</taxon>
        <taxon>Spermatophyta</taxon>
        <taxon>Magnoliopsida</taxon>
        <taxon>Liliopsida</taxon>
        <taxon>Poales</taxon>
        <taxon>Poaceae</taxon>
        <taxon>BOP clade</taxon>
        <taxon>Oryzoideae</taxon>
        <taxon>Oryzeae</taxon>
        <taxon>Oryzinae</taxon>
        <taxon>Oryza</taxon>
        <taxon>Oryza sativa</taxon>
    </lineage>
</organism>
<comment type="function">
    <text evidence="2 5">Calmodulin mediates the control of a large number of enzymes, ion channels and other proteins by Ca(2+). Among the enzymes to be stimulated by the calmodulin-Ca(2+) complex are a number of protein kinases and phosphatases (By similarity). Involved in salt stress response by association with BAG6 (PubMed:38252225).</text>
</comment>
<comment type="subunit">
    <text evidence="5">Interacts with BAG6 under normal conditions (PubMed:38252225). Dissociation of the interaction when calcium-CAM1-1 binding increases under saline-alkaline stress (PubMed:38252225).</text>
</comment>
<comment type="miscellaneous">
    <text>This protein has four functional calcium-binding sites.</text>
</comment>
<comment type="similarity">
    <text evidence="7">Belongs to the calmodulin family.</text>
</comment>